<feature type="chain" id="PRO_1000076044" description="Large-conductance mechanosensitive channel">
    <location>
        <begin position="1"/>
        <end position="133"/>
    </location>
</feature>
<feature type="transmembrane region" description="Helical" evidence="1">
    <location>
        <begin position="14"/>
        <end position="34"/>
    </location>
</feature>
<feature type="transmembrane region" description="Helical" evidence="1">
    <location>
        <begin position="73"/>
        <end position="93"/>
    </location>
</feature>
<gene>
    <name evidence="1" type="primary">mscL</name>
    <name type="ordered locus">RSal33209_1734</name>
</gene>
<sequence length="133" mass="14273">MIKGFRDFILKGNVVDLAVAVVIGAAFGTVVTTLVNNIIMPLIAGIVGKPSFNDVWAFQIGSDPANKLLLGAFITVLLNFVIIAAAIYFMVVVPMNHVIARRNAKLGIKAGEETPDPQIVLLTEIRDALKSRS</sequence>
<dbReference type="EMBL" id="CP000910">
    <property type="protein sequence ID" value="ABY23470.1"/>
    <property type="molecule type" value="Genomic_DNA"/>
</dbReference>
<dbReference type="RefSeq" id="WP_012245142.1">
    <property type="nucleotide sequence ID" value="NC_010168.1"/>
</dbReference>
<dbReference type="SMR" id="A9WMF7"/>
<dbReference type="STRING" id="288705.RSal33209_1734"/>
<dbReference type="TCDB" id="1.A.22.1.9">
    <property type="family name" value="the large conductance mechanosensitive ion channel (mscl) family"/>
</dbReference>
<dbReference type="KEGG" id="rsa:RSal33209_1734"/>
<dbReference type="eggNOG" id="COG1970">
    <property type="taxonomic scope" value="Bacteria"/>
</dbReference>
<dbReference type="HOGENOM" id="CLU_095787_1_0_11"/>
<dbReference type="Proteomes" id="UP000002007">
    <property type="component" value="Chromosome"/>
</dbReference>
<dbReference type="GO" id="GO:0005886">
    <property type="term" value="C:plasma membrane"/>
    <property type="evidence" value="ECO:0007669"/>
    <property type="project" value="UniProtKB-SubCell"/>
</dbReference>
<dbReference type="GO" id="GO:0008381">
    <property type="term" value="F:mechanosensitive monoatomic ion channel activity"/>
    <property type="evidence" value="ECO:0007669"/>
    <property type="project" value="UniProtKB-UniRule"/>
</dbReference>
<dbReference type="Gene3D" id="1.10.1200.120">
    <property type="entry name" value="Large-conductance mechanosensitive channel, MscL, domain 1"/>
    <property type="match status" value="1"/>
</dbReference>
<dbReference type="HAMAP" id="MF_00115">
    <property type="entry name" value="MscL"/>
    <property type="match status" value="1"/>
</dbReference>
<dbReference type="InterPro" id="IPR019823">
    <property type="entry name" value="Mechanosensitive_channel_CS"/>
</dbReference>
<dbReference type="InterPro" id="IPR001185">
    <property type="entry name" value="MS_channel"/>
</dbReference>
<dbReference type="InterPro" id="IPR037673">
    <property type="entry name" value="MSC/AndL"/>
</dbReference>
<dbReference type="InterPro" id="IPR036019">
    <property type="entry name" value="MscL_channel"/>
</dbReference>
<dbReference type="NCBIfam" id="TIGR00220">
    <property type="entry name" value="mscL"/>
    <property type="match status" value="1"/>
</dbReference>
<dbReference type="PANTHER" id="PTHR30266:SF2">
    <property type="entry name" value="LARGE-CONDUCTANCE MECHANOSENSITIVE CHANNEL"/>
    <property type="match status" value="1"/>
</dbReference>
<dbReference type="PANTHER" id="PTHR30266">
    <property type="entry name" value="MECHANOSENSITIVE CHANNEL MSCL"/>
    <property type="match status" value="1"/>
</dbReference>
<dbReference type="Pfam" id="PF01741">
    <property type="entry name" value="MscL"/>
    <property type="match status" value="1"/>
</dbReference>
<dbReference type="PRINTS" id="PR01264">
    <property type="entry name" value="MECHCHANNEL"/>
</dbReference>
<dbReference type="SUPFAM" id="SSF81330">
    <property type="entry name" value="Gated mechanosensitive channel"/>
    <property type="match status" value="1"/>
</dbReference>
<dbReference type="PROSITE" id="PS01327">
    <property type="entry name" value="MSCL"/>
    <property type="match status" value="1"/>
</dbReference>
<evidence type="ECO:0000255" key="1">
    <source>
        <dbReference type="HAMAP-Rule" id="MF_00115"/>
    </source>
</evidence>
<reference key="1">
    <citation type="journal article" date="2008" name="J. Bacteriol.">
        <title>Genome sequence of the fish pathogen Renibacterium salmoninarum suggests reductive evolution away from an environmental Arthrobacter ancestor.</title>
        <authorList>
            <person name="Wiens G.D."/>
            <person name="Rockey D.D."/>
            <person name="Wu Z."/>
            <person name="Chang J."/>
            <person name="Levy R."/>
            <person name="Crane S."/>
            <person name="Chen D.S."/>
            <person name="Capri G.R."/>
            <person name="Burnett J.R."/>
            <person name="Sudheesh P.S."/>
            <person name="Schipma M.J."/>
            <person name="Burd H."/>
            <person name="Bhattacharyya A."/>
            <person name="Rhodes L.D."/>
            <person name="Kaul R."/>
            <person name="Strom M.S."/>
        </authorList>
    </citation>
    <scope>NUCLEOTIDE SEQUENCE [LARGE SCALE GENOMIC DNA]</scope>
    <source>
        <strain>ATCC 33209 / DSM 20767 / JCM 11484 / NBRC 15589 / NCIMB 2235</strain>
    </source>
</reference>
<accession>A9WMF7</accession>
<proteinExistence type="inferred from homology"/>
<protein>
    <recommendedName>
        <fullName evidence="1">Large-conductance mechanosensitive channel</fullName>
    </recommendedName>
</protein>
<comment type="function">
    <text evidence="1">Channel that opens in response to stretch forces in the membrane lipid bilayer. May participate in the regulation of osmotic pressure changes within the cell.</text>
</comment>
<comment type="subunit">
    <text evidence="1">Homopentamer.</text>
</comment>
<comment type="subcellular location">
    <subcellularLocation>
        <location evidence="1">Cell membrane</location>
        <topology evidence="1">Multi-pass membrane protein</topology>
    </subcellularLocation>
</comment>
<comment type="similarity">
    <text evidence="1">Belongs to the MscL family.</text>
</comment>
<name>MSCL_RENSM</name>
<organism>
    <name type="scientific">Renibacterium salmoninarum (strain ATCC 33209 / DSM 20767 / JCM 11484 / NBRC 15589 / NCIMB 2235)</name>
    <dbReference type="NCBI Taxonomy" id="288705"/>
    <lineage>
        <taxon>Bacteria</taxon>
        <taxon>Bacillati</taxon>
        <taxon>Actinomycetota</taxon>
        <taxon>Actinomycetes</taxon>
        <taxon>Micrococcales</taxon>
        <taxon>Micrococcaceae</taxon>
        <taxon>Renibacterium</taxon>
    </lineage>
</organism>
<keyword id="KW-1003">Cell membrane</keyword>
<keyword id="KW-0407">Ion channel</keyword>
<keyword id="KW-0406">Ion transport</keyword>
<keyword id="KW-0472">Membrane</keyword>
<keyword id="KW-1185">Reference proteome</keyword>
<keyword id="KW-0812">Transmembrane</keyword>
<keyword id="KW-1133">Transmembrane helix</keyword>
<keyword id="KW-0813">Transport</keyword>